<protein>
    <recommendedName>
        <fullName>Ectonucleoside triphosphate diphosphohydrolase 2</fullName>
        <shortName>NTPDase 2</shortName>
        <ecNumber>3.6.1.-</ecNumber>
    </recommendedName>
    <alternativeName>
        <fullName>CD39 antigen-like 1</fullName>
    </alternativeName>
    <alternativeName>
        <fullName>Ecto-ATP diphosphohydrolase 2</fullName>
        <shortName>Ecto-ATPDase 2</shortName>
        <shortName>Ecto-ATPase 2</shortName>
    </alternativeName>
</protein>
<organism>
    <name type="scientific">Homo sapiens</name>
    <name type="common">Human</name>
    <dbReference type="NCBI Taxonomy" id="9606"/>
    <lineage>
        <taxon>Eukaryota</taxon>
        <taxon>Metazoa</taxon>
        <taxon>Chordata</taxon>
        <taxon>Craniata</taxon>
        <taxon>Vertebrata</taxon>
        <taxon>Euteleostomi</taxon>
        <taxon>Mammalia</taxon>
        <taxon>Eutheria</taxon>
        <taxon>Euarchontoglires</taxon>
        <taxon>Primates</taxon>
        <taxon>Haplorrhini</taxon>
        <taxon>Catarrhini</taxon>
        <taxon>Hominidae</taxon>
        <taxon>Homo</taxon>
    </lineage>
</organism>
<comment type="function">
    <text>In the nervous system, could hydrolyze ATP and other nucleotides to regulate purinergic neurotransmission. Hydrolyzes ADP only to a marginal extent. The order of activity with different substrates is ATP &gt; GTP &gt; CTP = ITP &gt; UTP &gt;&gt; ADP = UDP.</text>
</comment>
<comment type="cofactor">
    <cofactor evidence="3">
        <name>Ca(2+)</name>
        <dbReference type="ChEBI" id="CHEBI:29108"/>
    </cofactor>
    <cofactor evidence="3">
        <name>Mg(2+)</name>
        <dbReference type="ChEBI" id="CHEBI:18420"/>
    </cofactor>
</comment>
<comment type="interaction">
    <interactant intactId="EBI-3913907">
        <id>Q9Y5L3</id>
    </interactant>
    <interactant intactId="EBI-466029">
        <id>P42858</id>
        <label>HTT</label>
    </interactant>
    <organismsDiffer>false</organismsDiffer>
    <experiments>3</experiments>
</comment>
<comment type="interaction">
    <interactant intactId="EBI-3913907">
        <id>Q9Y5L3</id>
    </interactant>
    <interactant intactId="EBI-748974">
        <id>Q96CV9</id>
        <label>OPTN</label>
    </interactant>
    <organismsDiffer>false</organismsDiffer>
    <experiments>3</experiments>
</comment>
<comment type="subcellular location">
    <molecule>Isoform Long</molecule>
    <subcellularLocation>
        <location>Cell membrane</location>
        <topology>Multi-pass membrane protein</topology>
    </subcellularLocation>
</comment>
<comment type="subcellular location">
    <molecule>Isoform Short</molecule>
    <subcellularLocation>
        <location>Endoplasmic reticulum membrane</location>
        <topology>Multi-pass membrane protein</topology>
    </subcellularLocation>
</comment>
<comment type="subcellular location">
    <molecule>Isoform gamma</molecule>
    <subcellularLocation>
        <location>Endoplasmic reticulum membrane</location>
        <topology>Multi-pass membrane protein</topology>
    </subcellularLocation>
</comment>
<comment type="alternative products">
    <event type="alternative splicing"/>
    <isoform>
        <id>Q9Y5L3-1</id>
        <name>Long</name>
        <name>alpha</name>
        <sequence type="displayed"/>
    </isoform>
    <isoform>
        <id>Q9Y5L3-2</id>
        <name>Short</name>
        <name>beta</name>
        <sequence type="described" ref="VSP_003610"/>
    </isoform>
    <isoform>
        <id>Q9Y5L3-3</id>
        <name>gamma</name>
        <sequence type="described" ref="VSP_003610 VSP_053548"/>
    </isoform>
</comment>
<comment type="tissue specificity">
    <text>Brain, placenta, skeletal muscle, kidney, pancreas, heart, ovary, testis, colon, small intestine, prostate and pancreas. No expression in adult thymus, spleen, lung, liver and peripheral blood leukocytes.</text>
</comment>
<comment type="miscellaneous">
    <molecule>Isoform Short</molecule>
    <text evidence="6">Catalytically inactive.</text>
</comment>
<comment type="miscellaneous">
    <molecule>Isoform gamma</molecule>
    <text evidence="6">Catalytically inactive.</text>
</comment>
<comment type="similarity">
    <text evidence="6">Belongs to the GDA1/CD39 NTPase family.</text>
</comment>
<reference key="1">
    <citation type="journal article" date="1997" name="Mamm. Genome">
        <title>Cloning and mapping of a human and mouse gene with homology to ecto-ATPase genes.</title>
        <authorList>
            <person name="Chadwick B.P."/>
            <person name="Frischauf A.-M."/>
        </authorList>
    </citation>
    <scope>NUCLEOTIDE SEQUENCE [MRNA] (ISOFORM SHORT)</scope>
    <source>
        <tissue>Keratinocyte</tissue>
    </source>
</reference>
<reference key="2">
    <citation type="journal article" date="1999" name="Br. J. Pharmacol.">
        <title>Functional expression of a cDNA encoding a human ecto-ATPase.</title>
        <authorList>
            <person name="Mateo J."/>
            <person name="Harden T.K."/>
            <person name="Boyer J.L."/>
        </authorList>
    </citation>
    <scope>NUCLEOTIDE SEQUENCE [MRNA] (ISOFORM LONG)</scope>
    <scope>CATALYTIC ACTIVITY</scope>
    <scope>COFACTOR</scope>
    <scope>CHARACTERIZATION</scope>
</reference>
<reference key="3">
    <citation type="journal article" date="2005" name="Biochemistry">
        <title>Either the carboxyl- or the amino-terminal region of the human ecto-ATPase (E-NTPDase 2) confers detergent and temperature sensitivity to the chicken ecto-ATP-diphosphohydrolase (E-NTPDase 8).</title>
        <authorList>
            <person name="Mukasa T."/>
            <person name="Lee Y."/>
            <person name="Knowles A.F."/>
        </authorList>
    </citation>
    <scope>NUCLEOTIDE SEQUENCE [MRNA] (ISOFORM LONG)</scope>
</reference>
<reference key="4">
    <citation type="journal article" date="2004" name="Nature">
        <title>DNA sequence and analysis of human chromosome 9.</title>
        <authorList>
            <person name="Humphray S.J."/>
            <person name="Oliver K."/>
            <person name="Hunt A.R."/>
            <person name="Plumb R.W."/>
            <person name="Loveland J.E."/>
            <person name="Howe K.L."/>
            <person name="Andrews T.D."/>
            <person name="Searle S."/>
            <person name="Hunt S.E."/>
            <person name="Scott C.E."/>
            <person name="Jones M.C."/>
            <person name="Ainscough R."/>
            <person name="Almeida J.P."/>
            <person name="Ambrose K.D."/>
            <person name="Ashwell R.I.S."/>
            <person name="Babbage A.K."/>
            <person name="Babbage S."/>
            <person name="Bagguley C.L."/>
            <person name="Bailey J."/>
            <person name="Banerjee R."/>
            <person name="Barker D.J."/>
            <person name="Barlow K.F."/>
            <person name="Bates K."/>
            <person name="Beasley H."/>
            <person name="Beasley O."/>
            <person name="Bird C.P."/>
            <person name="Bray-Allen S."/>
            <person name="Brown A.J."/>
            <person name="Brown J.Y."/>
            <person name="Burford D."/>
            <person name="Burrill W."/>
            <person name="Burton J."/>
            <person name="Carder C."/>
            <person name="Carter N.P."/>
            <person name="Chapman J.C."/>
            <person name="Chen Y."/>
            <person name="Clarke G."/>
            <person name="Clark S.Y."/>
            <person name="Clee C.M."/>
            <person name="Clegg S."/>
            <person name="Collier R.E."/>
            <person name="Corby N."/>
            <person name="Crosier M."/>
            <person name="Cummings A.T."/>
            <person name="Davies J."/>
            <person name="Dhami P."/>
            <person name="Dunn M."/>
            <person name="Dutta I."/>
            <person name="Dyer L.W."/>
            <person name="Earthrowl M.E."/>
            <person name="Faulkner L."/>
            <person name="Fleming C.J."/>
            <person name="Frankish A."/>
            <person name="Frankland J.A."/>
            <person name="French L."/>
            <person name="Fricker D.G."/>
            <person name="Garner P."/>
            <person name="Garnett J."/>
            <person name="Ghori J."/>
            <person name="Gilbert J.G.R."/>
            <person name="Glison C."/>
            <person name="Grafham D.V."/>
            <person name="Gribble S."/>
            <person name="Griffiths C."/>
            <person name="Griffiths-Jones S."/>
            <person name="Grocock R."/>
            <person name="Guy J."/>
            <person name="Hall R.E."/>
            <person name="Hammond S."/>
            <person name="Harley J.L."/>
            <person name="Harrison E.S.I."/>
            <person name="Hart E.A."/>
            <person name="Heath P.D."/>
            <person name="Henderson C.D."/>
            <person name="Hopkins B.L."/>
            <person name="Howard P.J."/>
            <person name="Howden P.J."/>
            <person name="Huckle E."/>
            <person name="Johnson C."/>
            <person name="Johnson D."/>
            <person name="Joy A.A."/>
            <person name="Kay M."/>
            <person name="Keenan S."/>
            <person name="Kershaw J.K."/>
            <person name="Kimberley A.M."/>
            <person name="King A."/>
            <person name="Knights A."/>
            <person name="Laird G.K."/>
            <person name="Langford C."/>
            <person name="Lawlor S."/>
            <person name="Leongamornlert D.A."/>
            <person name="Leversha M."/>
            <person name="Lloyd C."/>
            <person name="Lloyd D.M."/>
            <person name="Lovell J."/>
            <person name="Martin S."/>
            <person name="Mashreghi-Mohammadi M."/>
            <person name="Matthews L."/>
            <person name="McLaren S."/>
            <person name="McLay K.E."/>
            <person name="McMurray A."/>
            <person name="Milne S."/>
            <person name="Nickerson T."/>
            <person name="Nisbett J."/>
            <person name="Nordsiek G."/>
            <person name="Pearce A.V."/>
            <person name="Peck A.I."/>
            <person name="Porter K.M."/>
            <person name="Pandian R."/>
            <person name="Pelan S."/>
            <person name="Phillimore B."/>
            <person name="Povey S."/>
            <person name="Ramsey Y."/>
            <person name="Rand V."/>
            <person name="Scharfe M."/>
            <person name="Sehra H.K."/>
            <person name="Shownkeen R."/>
            <person name="Sims S.K."/>
            <person name="Skuce C.D."/>
            <person name="Smith M."/>
            <person name="Steward C.A."/>
            <person name="Swarbreck D."/>
            <person name="Sycamore N."/>
            <person name="Tester J."/>
            <person name="Thorpe A."/>
            <person name="Tracey A."/>
            <person name="Tromans A."/>
            <person name="Thomas D.W."/>
            <person name="Wall M."/>
            <person name="Wallis J.M."/>
            <person name="West A.P."/>
            <person name="Whitehead S.L."/>
            <person name="Willey D.L."/>
            <person name="Williams S.A."/>
            <person name="Wilming L."/>
            <person name="Wray P.W."/>
            <person name="Young L."/>
            <person name="Ashurst J.L."/>
            <person name="Coulson A."/>
            <person name="Blocker H."/>
            <person name="Durbin R.M."/>
            <person name="Sulston J.E."/>
            <person name="Hubbard T."/>
            <person name="Jackson M.J."/>
            <person name="Bentley D.R."/>
            <person name="Beck S."/>
            <person name="Rogers J."/>
            <person name="Dunham I."/>
        </authorList>
    </citation>
    <scope>NUCLEOTIDE SEQUENCE [LARGE SCALE GENOMIC DNA]</scope>
</reference>
<reference key="5">
    <citation type="submission" date="2005-07" db="EMBL/GenBank/DDBJ databases">
        <authorList>
            <person name="Mural R.J."/>
            <person name="Istrail S."/>
            <person name="Sutton G.G."/>
            <person name="Florea L."/>
            <person name="Halpern A.L."/>
            <person name="Mobarry C.M."/>
            <person name="Lippert R."/>
            <person name="Walenz B."/>
            <person name="Shatkay H."/>
            <person name="Dew I."/>
            <person name="Miller J.R."/>
            <person name="Flanigan M.J."/>
            <person name="Edwards N.J."/>
            <person name="Bolanos R."/>
            <person name="Fasulo D."/>
            <person name="Halldorsson B.V."/>
            <person name="Hannenhalli S."/>
            <person name="Turner R."/>
            <person name="Yooseph S."/>
            <person name="Lu F."/>
            <person name="Nusskern D.R."/>
            <person name="Shue B.C."/>
            <person name="Zheng X.H."/>
            <person name="Zhong F."/>
            <person name="Delcher A.L."/>
            <person name="Huson D.H."/>
            <person name="Kravitz S.A."/>
            <person name="Mouchard L."/>
            <person name="Reinert K."/>
            <person name="Remington K.A."/>
            <person name="Clark A.G."/>
            <person name="Waterman M.S."/>
            <person name="Eichler E.E."/>
            <person name="Adams M.D."/>
            <person name="Hunkapiller M.W."/>
            <person name="Myers E.W."/>
            <person name="Venter J.C."/>
        </authorList>
    </citation>
    <scope>NUCLEOTIDE SEQUENCE [LARGE SCALE GENOMIC DNA]</scope>
</reference>
<reference key="6">
    <citation type="journal article" date="2004" name="Genome Res.">
        <title>The status, quality, and expansion of the NIH full-length cDNA project: the Mammalian Gene Collection (MGC).</title>
        <authorList>
            <consortium name="The MGC Project Team"/>
        </authorList>
    </citation>
    <scope>NUCLEOTIDE SEQUENCE [LARGE SCALE MRNA] (ISOFORM LONG)</scope>
    <source>
        <tissue>Brain</tissue>
    </source>
</reference>
<reference key="7">
    <citation type="journal article" date="2003" name="J. Biol. Chem.">
        <title>Requirement of Cys399 for processing of the human ecto-ATPase (NTPDase2) and its implications for determination of the activities of splice variants of the enzyme.</title>
        <authorList>
            <person name="Mateo J."/>
            <person name="Kreda S."/>
            <person name="Henry C.E."/>
            <person name="Harden T.K."/>
            <person name="Boyer J.L."/>
        </authorList>
    </citation>
    <scope>SUBCELLULAR LOCATION</scope>
    <scope>ALTERNATIVE SPLICING</scope>
    <scope>MUTAGENESIS OF CYS-399 AND ASN-443</scope>
    <scope>GLYCOSYLATION AT ASN-443</scope>
</reference>
<evidence type="ECO:0000250" key="1">
    <source>
        <dbReference type="UniProtKB" id="O35795"/>
    </source>
</evidence>
<evidence type="ECO:0000255" key="2"/>
<evidence type="ECO:0000269" key="3">
    <source>
    </source>
</evidence>
<evidence type="ECO:0000269" key="4">
    <source>
    </source>
</evidence>
<evidence type="ECO:0000303" key="5">
    <source>
    </source>
</evidence>
<evidence type="ECO:0000305" key="6"/>
<keyword id="KW-0025">Alternative splicing</keyword>
<keyword id="KW-0067">ATP-binding</keyword>
<keyword id="KW-0106">Calcium</keyword>
<keyword id="KW-1003">Cell membrane</keyword>
<keyword id="KW-1015">Disulfide bond</keyword>
<keyword id="KW-0256">Endoplasmic reticulum</keyword>
<keyword id="KW-0325">Glycoprotein</keyword>
<keyword id="KW-0378">Hydrolase</keyword>
<keyword id="KW-0460">Magnesium</keyword>
<keyword id="KW-0472">Membrane</keyword>
<keyword id="KW-0547">Nucleotide-binding</keyword>
<keyword id="KW-1267">Proteomics identification</keyword>
<keyword id="KW-1185">Reference proteome</keyword>
<keyword id="KW-0812">Transmembrane</keyword>
<keyword id="KW-1133">Transmembrane helix</keyword>
<name>ENTP2_HUMAN</name>
<feature type="chain" id="PRO_0000209906" description="Ectonucleoside triphosphate diphosphohydrolase 2">
    <location>
        <begin position="1"/>
        <end position="495"/>
    </location>
</feature>
<feature type="topological domain" description="Cytoplasmic" evidence="2">
    <location>
        <begin position="1"/>
        <end position="7"/>
    </location>
</feature>
<feature type="transmembrane region" description="Helical" evidence="2">
    <location>
        <begin position="8"/>
        <end position="28"/>
    </location>
</feature>
<feature type="topological domain" description="Extracellular" evidence="2">
    <location>
        <begin position="29"/>
        <end position="462"/>
    </location>
</feature>
<feature type="transmembrane region" description="Helical" evidence="2">
    <location>
        <begin position="463"/>
        <end position="483"/>
    </location>
</feature>
<feature type="topological domain" description="Cytoplasmic" evidence="2">
    <location>
        <begin position="484"/>
        <end position="495"/>
    </location>
</feature>
<feature type="active site" description="Proton acceptor" evidence="1">
    <location>
        <position position="165"/>
    </location>
</feature>
<feature type="binding site" evidence="1">
    <location>
        <begin position="204"/>
        <end position="208"/>
    </location>
    <ligand>
        <name>ATP</name>
        <dbReference type="ChEBI" id="CHEBI:30616"/>
    </ligand>
</feature>
<feature type="glycosylation site" description="N-linked (GlcNAc...) asparagine" evidence="2">
    <location>
        <position position="64"/>
    </location>
</feature>
<feature type="glycosylation site" description="N-linked (GlcNAc...) asparagine" evidence="2">
    <location>
        <position position="129"/>
    </location>
</feature>
<feature type="glycosylation site" description="N-linked (GlcNAc...) asparagine" evidence="2">
    <location>
        <position position="294"/>
    </location>
</feature>
<feature type="glycosylation site" description="N-linked (GlcNAc...) asparagine" evidence="2">
    <location>
        <position position="378"/>
    </location>
</feature>
<feature type="glycosylation site" description="N-linked (GlcNAc...) asparagine" evidence="4">
    <location>
        <position position="443"/>
    </location>
</feature>
<feature type="disulfide bond" evidence="1">
    <location>
        <begin position="75"/>
        <end position="99"/>
    </location>
</feature>
<feature type="disulfide bond" evidence="1">
    <location>
        <begin position="242"/>
        <end position="284"/>
    </location>
</feature>
<feature type="disulfide bond" evidence="1">
    <location>
        <begin position="265"/>
        <end position="310"/>
    </location>
</feature>
<feature type="disulfide bond" evidence="1">
    <location>
        <begin position="323"/>
        <end position="328"/>
    </location>
</feature>
<feature type="disulfide bond" evidence="1">
    <location>
        <begin position="377"/>
        <end position="399"/>
    </location>
</feature>
<feature type="splice variant" id="VSP_003610" description="In isoform Short and isoform gamma." evidence="5">
    <location>
        <begin position="383"/>
        <end position="405"/>
    </location>
</feature>
<feature type="splice variant" id="VSP_053548" description="In isoform gamma." evidence="6">
    <location>
        <begin position="406"/>
        <end position="428"/>
    </location>
</feature>
<feature type="sequence variant" id="VAR_050307" description="In dbSNP:rs34618694.">
    <original>A</original>
    <variation>V</variation>
    <location>
        <position position="103"/>
    </location>
</feature>
<feature type="mutagenesis site" description="Abolishes ecto-ATPase activity, accumulates intracellularly." evidence="4">
    <original>C</original>
    <variation>S</variation>
    <location>
        <position position="399"/>
    </location>
</feature>
<feature type="mutagenesis site" description="7% of wild-type ATPase activity, accumulates intracellularly." evidence="4">
    <original>N</original>
    <variation>D</variation>
    <location>
        <position position="443"/>
    </location>
</feature>
<dbReference type="EC" id="3.6.1.-"/>
<dbReference type="EMBL" id="U91510">
    <property type="protein sequence ID" value="AAB81013.1"/>
    <property type="molecule type" value="mRNA"/>
</dbReference>
<dbReference type="EMBL" id="AF144748">
    <property type="protein sequence ID" value="AAD40239.1"/>
    <property type="molecule type" value="mRNA"/>
</dbReference>
<dbReference type="EMBL" id="EF495152">
    <property type="protein sequence ID" value="ABP58644.1"/>
    <property type="molecule type" value="mRNA"/>
</dbReference>
<dbReference type="EMBL" id="AL807752">
    <property type="status" value="NOT_ANNOTATED_CDS"/>
    <property type="molecule type" value="Genomic_DNA"/>
</dbReference>
<dbReference type="EMBL" id="CH471090">
    <property type="protein sequence ID" value="EAW88336.1"/>
    <property type="molecule type" value="Genomic_DNA"/>
</dbReference>
<dbReference type="EMBL" id="CH471090">
    <property type="protein sequence ID" value="EAW88337.1"/>
    <property type="molecule type" value="Genomic_DNA"/>
</dbReference>
<dbReference type="EMBL" id="BC035738">
    <property type="protein sequence ID" value="AAH35738.1"/>
    <property type="molecule type" value="mRNA"/>
</dbReference>
<dbReference type="CCDS" id="CCDS7025.1">
    <molecule id="Q9Y5L3-2"/>
</dbReference>
<dbReference type="CCDS" id="CCDS7026.1">
    <molecule id="Q9Y5L3-1"/>
</dbReference>
<dbReference type="RefSeq" id="NP_001237.1">
    <molecule id="Q9Y5L3-2"/>
    <property type="nucleotide sequence ID" value="NM_001246.4"/>
</dbReference>
<dbReference type="RefSeq" id="NP_982293.1">
    <molecule id="Q9Y5L3-1"/>
    <property type="nucleotide sequence ID" value="NM_203468.3"/>
</dbReference>
<dbReference type="SMR" id="Q9Y5L3"/>
<dbReference type="BioGRID" id="107392">
    <property type="interactions" value="144"/>
</dbReference>
<dbReference type="FunCoup" id="Q9Y5L3">
    <property type="interactions" value="307"/>
</dbReference>
<dbReference type="IntAct" id="Q9Y5L3">
    <property type="interactions" value="92"/>
</dbReference>
<dbReference type="STRING" id="9606.ENSP00000347213"/>
<dbReference type="BindingDB" id="Q9Y5L3"/>
<dbReference type="ChEMBL" id="CHEMBL5049"/>
<dbReference type="GuidetoPHARMACOLOGY" id="2889"/>
<dbReference type="GlyConnect" id="1193">
    <property type="glycosylation" value="45 N-Linked glycans (5 sites)"/>
</dbReference>
<dbReference type="GlyCosmos" id="Q9Y5L3">
    <property type="glycosylation" value="5 sites, 47 glycans"/>
</dbReference>
<dbReference type="GlyGen" id="Q9Y5L3">
    <property type="glycosylation" value="10 sites, 49 N-linked glycans (5 sites), 1 O-linked glycan (2 sites)"/>
</dbReference>
<dbReference type="iPTMnet" id="Q9Y5L3"/>
<dbReference type="PhosphoSitePlus" id="Q9Y5L3"/>
<dbReference type="SwissPalm" id="Q9Y5L3"/>
<dbReference type="BioMuta" id="ENTPD2"/>
<dbReference type="DMDM" id="18203633"/>
<dbReference type="CPTAC" id="CPTAC-1489"/>
<dbReference type="jPOST" id="Q9Y5L3"/>
<dbReference type="MassIVE" id="Q9Y5L3"/>
<dbReference type="PaxDb" id="9606-ENSP00000347213"/>
<dbReference type="PeptideAtlas" id="Q9Y5L3"/>
<dbReference type="ProteomicsDB" id="86440">
    <molecule id="Q9Y5L3-1"/>
</dbReference>
<dbReference type="ProteomicsDB" id="86441">
    <molecule id="Q9Y5L3-2"/>
</dbReference>
<dbReference type="Antibodypedia" id="2981">
    <property type="antibodies" value="216 antibodies from 33 providers"/>
</dbReference>
<dbReference type="DNASU" id="954"/>
<dbReference type="Ensembl" id="ENST00000312665.7">
    <molecule id="Q9Y5L3-2"/>
    <property type="protein sequence ID" value="ENSP00000312494.5"/>
    <property type="gene ID" value="ENSG00000054179.12"/>
</dbReference>
<dbReference type="Ensembl" id="ENST00000355097.7">
    <molecule id="Q9Y5L3-1"/>
    <property type="protein sequence ID" value="ENSP00000347213.2"/>
    <property type="gene ID" value="ENSG00000054179.12"/>
</dbReference>
<dbReference type="GeneID" id="954"/>
<dbReference type="KEGG" id="hsa:954"/>
<dbReference type="MANE-Select" id="ENST00000355097.7">
    <property type="protein sequence ID" value="ENSP00000347213.2"/>
    <property type="RefSeq nucleotide sequence ID" value="NM_203468.3"/>
    <property type="RefSeq protein sequence ID" value="NP_982293.1"/>
</dbReference>
<dbReference type="UCSC" id="uc004ckw.3">
    <molecule id="Q9Y5L3-1"/>
    <property type="organism name" value="human"/>
</dbReference>
<dbReference type="AGR" id="HGNC:3364"/>
<dbReference type="CTD" id="954"/>
<dbReference type="DisGeNET" id="954"/>
<dbReference type="GeneCards" id="ENTPD2"/>
<dbReference type="HGNC" id="HGNC:3364">
    <property type="gene designation" value="ENTPD2"/>
</dbReference>
<dbReference type="HPA" id="ENSG00000054179">
    <property type="expression patterns" value="Low tissue specificity"/>
</dbReference>
<dbReference type="MIM" id="602012">
    <property type="type" value="gene"/>
</dbReference>
<dbReference type="neXtProt" id="NX_Q9Y5L3"/>
<dbReference type="OpenTargets" id="ENSG00000054179"/>
<dbReference type="PharmGKB" id="PA27799"/>
<dbReference type="VEuPathDB" id="HostDB:ENSG00000054179"/>
<dbReference type="eggNOG" id="KOG1386">
    <property type="taxonomic scope" value="Eukaryota"/>
</dbReference>
<dbReference type="GeneTree" id="ENSGT01110000267162"/>
<dbReference type="HOGENOM" id="CLU_010246_2_3_1"/>
<dbReference type="InParanoid" id="Q9Y5L3"/>
<dbReference type="OMA" id="NEECRYQ"/>
<dbReference type="OrthoDB" id="6372431at2759"/>
<dbReference type="PAN-GO" id="Q9Y5L3">
    <property type="GO annotations" value="4 GO annotations based on evolutionary models"/>
</dbReference>
<dbReference type="PhylomeDB" id="Q9Y5L3"/>
<dbReference type="TreeFam" id="TF332859"/>
<dbReference type="BioCyc" id="MetaCyc:ENSG00000054179-MONOMER"/>
<dbReference type="BRENDA" id="3.6.1.5">
    <property type="organism ID" value="2681"/>
</dbReference>
<dbReference type="PathwayCommons" id="Q9Y5L3"/>
<dbReference type="Reactome" id="R-HSA-8850843">
    <property type="pathway name" value="Phosphate bond hydrolysis by NTPDase proteins"/>
</dbReference>
<dbReference type="SABIO-RK" id="Q9Y5L3"/>
<dbReference type="SignaLink" id="Q9Y5L3"/>
<dbReference type="BioGRID-ORCS" id="954">
    <property type="hits" value="32 hits in 1140 CRISPR screens"/>
</dbReference>
<dbReference type="ChiTaRS" id="ENTPD2">
    <property type="organism name" value="human"/>
</dbReference>
<dbReference type="GeneWiki" id="ENTPD2"/>
<dbReference type="GenomeRNAi" id="954"/>
<dbReference type="Pharos" id="Q9Y5L3">
    <property type="development level" value="Tchem"/>
</dbReference>
<dbReference type="PRO" id="PR:Q9Y5L3"/>
<dbReference type="Proteomes" id="UP000005640">
    <property type="component" value="Chromosome 9"/>
</dbReference>
<dbReference type="RNAct" id="Q9Y5L3">
    <property type="molecule type" value="protein"/>
</dbReference>
<dbReference type="Bgee" id="ENSG00000054179">
    <property type="expression patterns" value="Expressed in dorsal root ganglion and 128 other cell types or tissues"/>
</dbReference>
<dbReference type="GO" id="GO:0005604">
    <property type="term" value="C:basement membrane"/>
    <property type="evidence" value="ECO:0007669"/>
    <property type="project" value="Ensembl"/>
</dbReference>
<dbReference type="GO" id="GO:0005789">
    <property type="term" value="C:endoplasmic reticulum membrane"/>
    <property type="evidence" value="ECO:0007669"/>
    <property type="project" value="UniProtKB-SubCell"/>
</dbReference>
<dbReference type="GO" id="GO:0070062">
    <property type="term" value="C:extracellular exosome"/>
    <property type="evidence" value="ECO:0007005"/>
    <property type="project" value="UniProtKB"/>
</dbReference>
<dbReference type="GO" id="GO:0005886">
    <property type="term" value="C:plasma membrane"/>
    <property type="evidence" value="ECO:0000318"/>
    <property type="project" value="GO_Central"/>
</dbReference>
<dbReference type="GO" id="GO:0005524">
    <property type="term" value="F:ATP binding"/>
    <property type="evidence" value="ECO:0007669"/>
    <property type="project" value="UniProtKB-KW"/>
</dbReference>
<dbReference type="GO" id="GO:0004382">
    <property type="term" value="F:GDP phosphatase activity"/>
    <property type="evidence" value="ECO:0000318"/>
    <property type="project" value="GO_Central"/>
</dbReference>
<dbReference type="GO" id="GO:0017111">
    <property type="term" value="F:ribonucleoside triphosphate phosphatase activity"/>
    <property type="evidence" value="ECO:0000318"/>
    <property type="project" value="GO_Central"/>
</dbReference>
<dbReference type="GO" id="GO:0045134">
    <property type="term" value="F:UDP phosphatase activity"/>
    <property type="evidence" value="ECO:0000318"/>
    <property type="project" value="GO_Central"/>
</dbReference>
<dbReference type="GO" id="GO:0007186">
    <property type="term" value="P:G protein-coupled receptor signaling pathway"/>
    <property type="evidence" value="ECO:0007669"/>
    <property type="project" value="Ensembl"/>
</dbReference>
<dbReference type="GO" id="GO:0009134">
    <property type="term" value="P:nucleoside diphosphate catabolic process"/>
    <property type="evidence" value="ECO:0000318"/>
    <property type="project" value="GO_Central"/>
</dbReference>
<dbReference type="GO" id="GO:0030168">
    <property type="term" value="P:platelet activation"/>
    <property type="evidence" value="ECO:0007669"/>
    <property type="project" value="Ensembl"/>
</dbReference>
<dbReference type="GO" id="GO:0009181">
    <property type="term" value="P:purine ribonucleoside diphosphate catabolic process"/>
    <property type="evidence" value="ECO:0007669"/>
    <property type="project" value="Ensembl"/>
</dbReference>
<dbReference type="CDD" id="cd24111">
    <property type="entry name" value="ASKHA_NBD_NTPDase2"/>
    <property type="match status" value="1"/>
</dbReference>
<dbReference type="FunFam" id="3.30.420.150:FF:000002">
    <property type="entry name" value="Ectonucleoside triphosphate diphosphohydrolase 1"/>
    <property type="match status" value="1"/>
</dbReference>
<dbReference type="FunFam" id="3.30.420.40:FF:000068">
    <property type="entry name" value="Ectonucleoside triphosphate diphosphohydrolase 1"/>
    <property type="match status" value="1"/>
</dbReference>
<dbReference type="Gene3D" id="3.30.420.40">
    <property type="match status" value="1"/>
</dbReference>
<dbReference type="Gene3D" id="3.30.420.150">
    <property type="entry name" value="Exopolyphosphatase. Domain 2"/>
    <property type="match status" value="1"/>
</dbReference>
<dbReference type="InterPro" id="IPR000407">
    <property type="entry name" value="GDA1_CD39_NTPase"/>
</dbReference>
<dbReference type="PANTHER" id="PTHR11782">
    <property type="entry name" value="ADENOSINE/GUANOSINE DIPHOSPHATASE"/>
    <property type="match status" value="1"/>
</dbReference>
<dbReference type="PANTHER" id="PTHR11782:SF33">
    <property type="entry name" value="ECTONUCLEOSIDE TRIPHOSPHATE DIPHOSPHOHYDROLASE 2"/>
    <property type="match status" value="1"/>
</dbReference>
<dbReference type="Pfam" id="PF01150">
    <property type="entry name" value="GDA1_CD39"/>
    <property type="match status" value="1"/>
</dbReference>
<dbReference type="PROSITE" id="PS01238">
    <property type="entry name" value="GDA1_CD39_NTPASE"/>
    <property type="match status" value="1"/>
</dbReference>
<sequence length="495" mass="53665">MAGKVRSLLPPLLLAAAGLAGLLLLCVPTRDVREPPALKYGIVLDAGSSHTSMFIYKWPADKENDTGIVGQHSSCDVPGGGISSYADNPSGASQSLVGCLEQALQDVPKERHAGTPLYLGATAGMRLLNLTNPEASTSVLMAVTHTLTQYPFDFRGARILSGQEEGVFGWVTANYLLENFIKYGWVGRWFRPRKGTLGAMDLGGASTQITFETTSPAEDRASEVQLHLYGQHYRVYTHSFLCYGRDQVLQRLLASALQTHGFHPCWPRGFSTQVLLGDVYQSPCTMAQRPQNFNSSARVSLSGSSDPHLCRDLVSGLFSFSSCPFSRCSFNGVFQPPVAGNFVAFSAFFYTVDFLRTSMGLPVATLQQLEAAAVNVCNQTWAQLQARVPGQRARLADYCAGAMFVQQLLSRGYGFDERAFGGVIFQKKAADTAVGWALGYMLNLTNLIPADPPGLRKGTDFSSWVVLLLLFASALLAALVLLLRQVHSAKLPSTI</sequence>
<gene>
    <name type="primary">ENTPD2</name>
    <name type="synonym">CD39L1</name>
</gene>
<accession>Q9Y5L3</accession>
<accession>O15464</accession>
<accession>Q5SPY6</accession>
<accession>Q5SPY7</accession>
<proteinExistence type="evidence at protein level"/>